<dbReference type="EC" id="4.1.1.65" evidence="1"/>
<dbReference type="EMBL" id="CP001131">
    <property type="protein sequence ID" value="ACG73585.1"/>
    <property type="molecule type" value="Genomic_DNA"/>
</dbReference>
<dbReference type="RefSeq" id="WP_012526375.1">
    <property type="nucleotide sequence ID" value="NC_011145.1"/>
</dbReference>
<dbReference type="SMR" id="B4UEL4"/>
<dbReference type="KEGG" id="ank:AnaeK_2358"/>
<dbReference type="HOGENOM" id="CLU_029061_4_0_7"/>
<dbReference type="OrthoDB" id="9802030at2"/>
<dbReference type="UniPathway" id="UPA00558">
    <property type="reaction ID" value="UER00616"/>
</dbReference>
<dbReference type="Proteomes" id="UP000001871">
    <property type="component" value="Chromosome"/>
</dbReference>
<dbReference type="GO" id="GO:0005886">
    <property type="term" value="C:plasma membrane"/>
    <property type="evidence" value="ECO:0007669"/>
    <property type="project" value="UniProtKB-SubCell"/>
</dbReference>
<dbReference type="GO" id="GO:0004609">
    <property type="term" value="F:phosphatidylserine decarboxylase activity"/>
    <property type="evidence" value="ECO:0007669"/>
    <property type="project" value="UniProtKB-UniRule"/>
</dbReference>
<dbReference type="GO" id="GO:0006646">
    <property type="term" value="P:phosphatidylethanolamine biosynthetic process"/>
    <property type="evidence" value="ECO:0007669"/>
    <property type="project" value="UniProtKB-UniRule"/>
</dbReference>
<dbReference type="HAMAP" id="MF_00662">
    <property type="entry name" value="PS_decarb_PSD_B_type1"/>
    <property type="match status" value="1"/>
</dbReference>
<dbReference type="InterPro" id="IPR003817">
    <property type="entry name" value="PS_Dcarbxylase"/>
</dbReference>
<dbReference type="InterPro" id="IPR033177">
    <property type="entry name" value="PSD-B"/>
</dbReference>
<dbReference type="InterPro" id="IPR033178">
    <property type="entry name" value="PSD_type1_pro"/>
</dbReference>
<dbReference type="NCBIfam" id="TIGR00163">
    <property type="entry name" value="PS_decarb"/>
    <property type="match status" value="1"/>
</dbReference>
<dbReference type="PANTHER" id="PTHR10067">
    <property type="entry name" value="PHOSPHATIDYLSERINE DECARBOXYLASE"/>
    <property type="match status" value="1"/>
</dbReference>
<dbReference type="PANTHER" id="PTHR10067:SF6">
    <property type="entry name" value="PHOSPHATIDYLSERINE DECARBOXYLASE PROENZYME, MITOCHONDRIAL"/>
    <property type="match status" value="1"/>
</dbReference>
<dbReference type="Pfam" id="PF02666">
    <property type="entry name" value="PS_Dcarbxylase"/>
    <property type="match status" value="1"/>
</dbReference>
<comment type="function">
    <text evidence="1">Catalyzes the formation of phosphatidylethanolamine (PtdEtn) from phosphatidylserine (PtdSer).</text>
</comment>
<comment type="catalytic activity">
    <reaction evidence="1">
        <text>a 1,2-diacyl-sn-glycero-3-phospho-L-serine + H(+) = a 1,2-diacyl-sn-glycero-3-phosphoethanolamine + CO2</text>
        <dbReference type="Rhea" id="RHEA:20828"/>
        <dbReference type="ChEBI" id="CHEBI:15378"/>
        <dbReference type="ChEBI" id="CHEBI:16526"/>
        <dbReference type="ChEBI" id="CHEBI:57262"/>
        <dbReference type="ChEBI" id="CHEBI:64612"/>
        <dbReference type="EC" id="4.1.1.65"/>
    </reaction>
</comment>
<comment type="cofactor">
    <cofactor evidence="1">
        <name>pyruvate</name>
        <dbReference type="ChEBI" id="CHEBI:15361"/>
    </cofactor>
    <text evidence="1">Binds 1 pyruvoyl group covalently per subunit.</text>
</comment>
<comment type="pathway">
    <text evidence="1">Phospholipid metabolism; phosphatidylethanolamine biosynthesis; phosphatidylethanolamine from CDP-diacylglycerol: step 2/2.</text>
</comment>
<comment type="subunit">
    <text evidence="1">Heterodimer of a large membrane-associated beta subunit and a small pyruvoyl-containing alpha subunit.</text>
</comment>
<comment type="subcellular location">
    <subcellularLocation>
        <location evidence="1">Cell membrane</location>
        <topology evidence="1">Peripheral membrane protein</topology>
    </subcellularLocation>
</comment>
<comment type="PTM">
    <text evidence="1">Is synthesized initially as an inactive proenzyme. Formation of the active enzyme involves a self-maturation process in which the active site pyruvoyl group is generated from an internal serine residue via an autocatalytic post-translational modification. Two non-identical subunits are generated from the proenzyme in this reaction, and the pyruvate is formed at the N-terminus of the alpha chain, which is derived from the carboxyl end of the proenzyme. The autoendoproteolytic cleavage occurs by a canonical serine protease mechanism, in which the side chain hydroxyl group of the serine supplies its oxygen atom to form the C-terminus of the beta chain, while the remainder of the serine residue undergoes an oxidative deamination to produce ammonia and the pyruvoyl prosthetic group on the alpha chain. During this reaction, the Ser that is part of the protease active site of the proenzyme becomes the pyruvoyl prosthetic group, which constitutes an essential element of the active site of the mature decarboxylase.</text>
</comment>
<comment type="similarity">
    <text evidence="1">Belongs to the phosphatidylserine decarboxylase family. PSD-B subfamily. Prokaryotic type I sub-subfamily.</text>
</comment>
<name>PSD_ANASK</name>
<accession>B4UEL4</accession>
<protein>
    <recommendedName>
        <fullName evidence="1">Phosphatidylserine decarboxylase proenzyme</fullName>
        <ecNumber evidence="1">4.1.1.65</ecNumber>
    </recommendedName>
    <component>
        <recommendedName>
            <fullName evidence="1">Phosphatidylserine decarboxylase alpha chain</fullName>
        </recommendedName>
    </component>
    <component>
        <recommendedName>
            <fullName evidence="1">Phosphatidylserine decarboxylase beta chain</fullName>
        </recommendedName>
    </component>
</protein>
<gene>
    <name evidence="1" type="primary">psd</name>
    <name type="ordered locus">AnaeK_2358</name>
</gene>
<organism>
    <name type="scientific">Anaeromyxobacter sp. (strain K)</name>
    <dbReference type="NCBI Taxonomy" id="447217"/>
    <lineage>
        <taxon>Bacteria</taxon>
        <taxon>Pseudomonadati</taxon>
        <taxon>Myxococcota</taxon>
        <taxon>Myxococcia</taxon>
        <taxon>Myxococcales</taxon>
        <taxon>Cystobacterineae</taxon>
        <taxon>Anaeromyxobacteraceae</taxon>
        <taxon>Anaeromyxobacter</taxon>
    </lineage>
</organism>
<feature type="chain" id="PRO_1000131336" description="Phosphatidylserine decarboxylase beta chain" evidence="1">
    <location>
        <begin position="1"/>
        <end position="248"/>
    </location>
</feature>
<feature type="chain" id="PRO_1000131337" description="Phosphatidylserine decarboxylase alpha chain" evidence="1">
    <location>
        <begin position="249"/>
        <end position="282"/>
    </location>
</feature>
<feature type="active site" description="Charge relay system; for autoendoproteolytic cleavage activity" evidence="1">
    <location>
        <position position="89"/>
    </location>
</feature>
<feature type="active site" description="Charge relay system; for autoendoproteolytic cleavage activity" evidence="1">
    <location>
        <position position="145"/>
    </location>
</feature>
<feature type="active site" description="Charge relay system; for autoendoproteolytic cleavage activity" evidence="1">
    <location>
        <position position="249"/>
    </location>
</feature>
<feature type="active site" description="Schiff-base intermediate with substrate; via pyruvic acid; for decarboxylase activity" evidence="1">
    <location>
        <position position="249"/>
    </location>
</feature>
<feature type="site" description="Cleavage (non-hydrolytic); by autocatalysis" evidence="1">
    <location>
        <begin position="248"/>
        <end position="249"/>
    </location>
</feature>
<feature type="modified residue" description="Pyruvic acid (Ser); by autocatalysis" evidence="1">
    <location>
        <position position="249"/>
    </location>
</feature>
<reference key="1">
    <citation type="submission" date="2008-08" db="EMBL/GenBank/DDBJ databases">
        <title>Complete sequence of Anaeromyxobacter sp. K.</title>
        <authorList>
            <consortium name="US DOE Joint Genome Institute"/>
            <person name="Lucas S."/>
            <person name="Copeland A."/>
            <person name="Lapidus A."/>
            <person name="Glavina del Rio T."/>
            <person name="Dalin E."/>
            <person name="Tice H."/>
            <person name="Bruce D."/>
            <person name="Goodwin L."/>
            <person name="Pitluck S."/>
            <person name="Saunders E."/>
            <person name="Brettin T."/>
            <person name="Detter J.C."/>
            <person name="Han C."/>
            <person name="Larimer F."/>
            <person name="Land M."/>
            <person name="Hauser L."/>
            <person name="Kyrpides N."/>
            <person name="Ovchinnikiva G."/>
            <person name="Beliaev A."/>
        </authorList>
    </citation>
    <scope>NUCLEOTIDE SEQUENCE [LARGE SCALE GENOMIC DNA]</scope>
    <source>
        <strain>K</strain>
    </source>
</reference>
<proteinExistence type="inferred from homology"/>
<sequence>MNDRLFISALRLLPKNALSRAVGALTRWRAPVPVRLAAMRAFARRYGIDLSECPDLDVYRTFGEFFARPLRPGLRPIAPGERVVASPVDGAVSETGRVEAGRLVQAKGIDYPAAALLGDEALAARFAGGAYATLYLAPKDYHRIHFPLGGKVTGWRYVPGKLWPVNPASVRTVRGLFALNERLVTVLETPLGACAVVAVGATVVGRVCAYYDPSIPFTNLPGAAPRRHDYETPIPVEKGQELGAFEMGSTVILLFEPGKARLDPRLAPGVRVRVGEPLGGAA</sequence>
<evidence type="ECO:0000255" key="1">
    <source>
        <dbReference type="HAMAP-Rule" id="MF_00662"/>
    </source>
</evidence>
<keyword id="KW-1003">Cell membrane</keyword>
<keyword id="KW-0210">Decarboxylase</keyword>
<keyword id="KW-0444">Lipid biosynthesis</keyword>
<keyword id="KW-0443">Lipid metabolism</keyword>
<keyword id="KW-0456">Lyase</keyword>
<keyword id="KW-0472">Membrane</keyword>
<keyword id="KW-0594">Phospholipid biosynthesis</keyword>
<keyword id="KW-1208">Phospholipid metabolism</keyword>
<keyword id="KW-0670">Pyruvate</keyword>
<keyword id="KW-0865">Zymogen</keyword>